<organism>
    <name type="scientific">Listeria innocua serovar 6a (strain ATCC BAA-680 / CLIP 11262)</name>
    <dbReference type="NCBI Taxonomy" id="272626"/>
    <lineage>
        <taxon>Bacteria</taxon>
        <taxon>Bacillati</taxon>
        <taxon>Bacillota</taxon>
        <taxon>Bacilli</taxon>
        <taxon>Bacillales</taxon>
        <taxon>Listeriaceae</taxon>
        <taxon>Listeria</taxon>
    </lineage>
</organism>
<dbReference type="EMBL" id="AL596173">
    <property type="protein sequence ID" value="CAC97993.1"/>
    <property type="molecule type" value="Genomic_DNA"/>
</dbReference>
<dbReference type="PIR" id="AI1777">
    <property type="entry name" value="AI1777"/>
</dbReference>
<dbReference type="RefSeq" id="WP_003720937.1">
    <property type="nucleotide sequence ID" value="NC_003212.1"/>
</dbReference>
<dbReference type="SMR" id="P66624"/>
<dbReference type="STRING" id="272626.gene:17567154"/>
<dbReference type="GeneID" id="93240499"/>
<dbReference type="KEGG" id="lin:rpsH"/>
<dbReference type="eggNOG" id="COG0096">
    <property type="taxonomic scope" value="Bacteria"/>
</dbReference>
<dbReference type="HOGENOM" id="CLU_098428_0_2_9"/>
<dbReference type="OrthoDB" id="9802617at2"/>
<dbReference type="Proteomes" id="UP000002513">
    <property type="component" value="Chromosome"/>
</dbReference>
<dbReference type="GO" id="GO:1990904">
    <property type="term" value="C:ribonucleoprotein complex"/>
    <property type="evidence" value="ECO:0007669"/>
    <property type="project" value="UniProtKB-KW"/>
</dbReference>
<dbReference type="GO" id="GO:0005840">
    <property type="term" value="C:ribosome"/>
    <property type="evidence" value="ECO:0007669"/>
    <property type="project" value="UniProtKB-KW"/>
</dbReference>
<dbReference type="GO" id="GO:0019843">
    <property type="term" value="F:rRNA binding"/>
    <property type="evidence" value="ECO:0007669"/>
    <property type="project" value="UniProtKB-UniRule"/>
</dbReference>
<dbReference type="GO" id="GO:0003735">
    <property type="term" value="F:structural constituent of ribosome"/>
    <property type="evidence" value="ECO:0007669"/>
    <property type="project" value="InterPro"/>
</dbReference>
<dbReference type="GO" id="GO:0006412">
    <property type="term" value="P:translation"/>
    <property type="evidence" value="ECO:0007669"/>
    <property type="project" value="UniProtKB-UniRule"/>
</dbReference>
<dbReference type="FunFam" id="3.30.1370.30:FF:000002">
    <property type="entry name" value="30S ribosomal protein S8"/>
    <property type="match status" value="1"/>
</dbReference>
<dbReference type="FunFam" id="3.30.1490.10:FF:000001">
    <property type="entry name" value="30S ribosomal protein S8"/>
    <property type="match status" value="1"/>
</dbReference>
<dbReference type="Gene3D" id="3.30.1370.30">
    <property type="match status" value="1"/>
</dbReference>
<dbReference type="Gene3D" id="3.30.1490.10">
    <property type="match status" value="1"/>
</dbReference>
<dbReference type="HAMAP" id="MF_01302_B">
    <property type="entry name" value="Ribosomal_uS8_B"/>
    <property type="match status" value="1"/>
</dbReference>
<dbReference type="InterPro" id="IPR000630">
    <property type="entry name" value="Ribosomal_uS8"/>
</dbReference>
<dbReference type="InterPro" id="IPR047863">
    <property type="entry name" value="Ribosomal_uS8_CS"/>
</dbReference>
<dbReference type="InterPro" id="IPR035987">
    <property type="entry name" value="Ribosomal_uS8_sf"/>
</dbReference>
<dbReference type="NCBIfam" id="NF001109">
    <property type="entry name" value="PRK00136.1"/>
    <property type="match status" value="1"/>
</dbReference>
<dbReference type="PANTHER" id="PTHR11758">
    <property type="entry name" value="40S RIBOSOMAL PROTEIN S15A"/>
    <property type="match status" value="1"/>
</dbReference>
<dbReference type="Pfam" id="PF00410">
    <property type="entry name" value="Ribosomal_S8"/>
    <property type="match status" value="1"/>
</dbReference>
<dbReference type="SUPFAM" id="SSF56047">
    <property type="entry name" value="Ribosomal protein S8"/>
    <property type="match status" value="1"/>
</dbReference>
<dbReference type="PROSITE" id="PS00053">
    <property type="entry name" value="RIBOSOMAL_S8"/>
    <property type="match status" value="1"/>
</dbReference>
<proteinExistence type="inferred from homology"/>
<comment type="function">
    <text evidence="1">One of the primary rRNA binding proteins, it binds directly to 16S rRNA central domain where it helps coordinate assembly of the platform of the 30S subunit.</text>
</comment>
<comment type="subunit">
    <text evidence="1">Part of the 30S ribosomal subunit. Contacts proteins S5 and S12.</text>
</comment>
<comment type="similarity">
    <text evidence="1">Belongs to the universal ribosomal protein uS8 family.</text>
</comment>
<evidence type="ECO:0000255" key="1">
    <source>
        <dbReference type="HAMAP-Rule" id="MF_01302"/>
    </source>
</evidence>
<evidence type="ECO:0000305" key="2"/>
<feature type="chain" id="PRO_0000126429" description="Small ribosomal subunit protein uS8">
    <location>
        <begin position="1"/>
        <end position="132"/>
    </location>
</feature>
<accession>P66624</accession>
<accession>Q927M1</accession>
<sequence>MVMTDPIADFLTRIRNANMVKHDKLELPASKIKKEIAEILKREGFIRDVEYIEDDNAGTIRVFLKYGATGERVITGLKRISKPGLRVYAKSTEVPKVLNGLGIAIVSTSQGVLTDKEARAKQVGGEVLAYVW</sequence>
<name>RS8_LISIN</name>
<protein>
    <recommendedName>
        <fullName evidence="1">Small ribosomal subunit protein uS8</fullName>
    </recommendedName>
    <alternativeName>
        <fullName evidence="2">30S ribosomal protein S8</fullName>
    </alternativeName>
</protein>
<keyword id="KW-0687">Ribonucleoprotein</keyword>
<keyword id="KW-0689">Ribosomal protein</keyword>
<keyword id="KW-0694">RNA-binding</keyword>
<keyword id="KW-0699">rRNA-binding</keyword>
<reference key="1">
    <citation type="journal article" date="2001" name="Science">
        <title>Comparative genomics of Listeria species.</title>
        <authorList>
            <person name="Glaser P."/>
            <person name="Frangeul L."/>
            <person name="Buchrieser C."/>
            <person name="Rusniok C."/>
            <person name="Amend A."/>
            <person name="Baquero F."/>
            <person name="Berche P."/>
            <person name="Bloecker H."/>
            <person name="Brandt P."/>
            <person name="Chakraborty T."/>
            <person name="Charbit A."/>
            <person name="Chetouani F."/>
            <person name="Couve E."/>
            <person name="de Daruvar A."/>
            <person name="Dehoux P."/>
            <person name="Domann E."/>
            <person name="Dominguez-Bernal G."/>
            <person name="Duchaud E."/>
            <person name="Durant L."/>
            <person name="Dussurget O."/>
            <person name="Entian K.-D."/>
            <person name="Fsihi H."/>
            <person name="Garcia-del Portillo F."/>
            <person name="Garrido P."/>
            <person name="Gautier L."/>
            <person name="Goebel W."/>
            <person name="Gomez-Lopez N."/>
            <person name="Hain T."/>
            <person name="Hauf J."/>
            <person name="Jackson D."/>
            <person name="Jones L.-M."/>
            <person name="Kaerst U."/>
            <person name="Kreft J."/>
            <person name="Kuhn M."/>
            <person name="Kunst F."/>
            <person name="Kurapkat G."/>
            <person name="Madueno E."/>
            <person name="Maitournam A."/>
            <person name="Mata Vicente J."/>
            <person name="Ng E."/>
            <person name="Nedjari H."/>
            <person name="Nordsiek G."/>
            <person name="Novella S."/>
            <person name="de Pablos B."/>
            <person name="Perez-Diaz J.-C."/>
            <person name="Purcell R."/>
            <person name="Remmel B."/>
            <person name="Rose M."/>
            <person name="Schlueter T."/>
            <person name="Simoes N."/>
            <person name="Tierrez A."/>
            <person name="Vazquez-Boland J.-A."/>
            <person name="Voss H."/>
            <person name="Wehland J."/>
            <person name="Cossart P."/>
        </authorList>
    </citation>
    <scope>NUCLEOTIDE SEQUENCE [LARGE SCALE GENOMIC DNA]</scope>
    <source>
        <strain>ATCC BAA-680 / CLIP 11262</strain>
    </source>
</reference>
<gene>
    <name evidence="1" type="primary">rpsH</name>
    <name type="ordered locus">lin2767</name>
</gene>